<comment type="function">
    <text evidence="1">Catalyzes the reversible adenylation of nicotinate mononucleotide (NaMN) to nicotinic acid adenine dinucleotide (NaAD).</text>
</comment>
<comment type="catalytic activity">
    <reaction evidence="1">
        <text>nicotinate beta-D-ribonucleotide + ATP + H(+) = deamido-NAD(+) + diphosphate</text>
        <dbReference type="Rhea" id="RHEA:22860"/>
        <dbReference type="ChEBI" id="CHEBI:15378"/>
        <dbReference type="ChEBI" id="CHEBI:30616"/>
        <dbReference type="ChEBI" id="CHEBI:33019"/>
        <dbReference type="ChEBI" id="CHEBI:57502"/>
        <dbReference type="ChEBI" id="CHEBI:58437"/>
        <dbReference type="EC" id="2.7.7.18"/>
    </reaction>
</comment>
<comment type="pathway">
    <text evidence="1">Cofactor biosynthesis; NAD(+) biosynthesis; deamido-NAD(+) from nicotinate D-ribonucleotide: step 1/1.</text>
</comment>
<comment type="similarity">
    <text evidence="1">Belongs to the NadD family.</text>
</comment>
<protein>
    <recommendedName>
        <fullName evidence="1">Probable nicotinate-nucleotide adenylyltransferase</fullName>
        <ecNumber evidence="1">2.7.7.18</ecNumber>
    </recommendedName>
    <alternativeName>
        <fullName evidence="1">Deamido-NAD(+) diphosphorylase</fullName>
    </alternativeName>
    <alternativeName>
        <fullName evidence="1">Deamido-NAD(+) pyrophosphorylase</fullName>
    </alternativeName>
    <alternativeName>
        <fullName evidence="1">Nicotinate mononucleotide adenylyltransferase</fullName>
        <shortName evidence="1">NaMN adenylyltransferase</shortName>
    </alternativeName>
</protein>
<reference key="1">
    <citation type="journal article" date="2004" name="PLoS Biol.">
        <title>Genomic insights into methanotrophy: the complete genome sequence of Methylococcus capsulatus (Bath).</title>
        <authorList>
            <person name="Ward N.L."/>
            <person name="Larsen O."/>
            <person name="Sakwa J."/>
            <person name="Bruseth L."/>
            <person name="Khouri H.M."/>
            <person name="Durkin A.S."/>
            <person name="Dimitrov G."/>
            <person name="Jiang L."/>
            <person name="Scanlan D."/>
            <person name="Kang K.H."/>
            <person name="Lewis M.R."/>
            <person name="Nelson K.E."/>
            <person name="Methe B.A."/>
            <person name="Wu M."/>
            <person name="Heidelberg J.F."/>
            <person name="Paulsen I.T."/>
            <person name="Fouts D.E."/>
            <person name="Ravel J."/>
            <person name="Tettelin H."/>
            <person name="Ren Q."/>
            <person name="Read T.D."/>
            <person name="DeBoy R.T."/>
            <person name="Seshadri R."/>
            <person name="Salzberg S.L."/>
            <person name="Jensen H.B."/>
            <person name="Birkeland N.K."/>
            <person name="Nelson W.C."/>
            <person name="Dodson R.J."/>
            <person name="Grindhaug S.H."/>
            <person name="Holt I.E."/>
            <person name="Eidhammer I."/>
            <person name="Jonasen I."/>
            <person name="Vanaken S."/>
            <person name="Utterback T.R."/>
            <person name="Feldblyum T.V."/>
            <person name="Fraser C.M."/>
            <person name="Lillehaug J.R."/>
            <person name="Eisen J.A."/>
        </authorList>
    </citation>
    <scope>NUCLEOTIDE SEQUENCE [LARGE SCALE GENOMIC DNA]</scope>
    <source>
        <strain>ATCC 33009 / NCIMB 11132 / Bath</strain>
    </source>
</reference>
<dbReference type="EC" id="2.7.7.18" evidence="1"/>
<dbReference type="EMBL" id="AE017282">
    <property type="protein sequence ID" value="AAU91860.1"/>
    <property type="molecule type" value="Genomic_DNA"/>
</dbReference>
<dbReference type="RefSeq" id="WP_010961131.1">
    <property type="nucleotide sequence ID" value="NC_002977.6"/>
</dbReference>
<dbReference type="SMR" id="Q606Y2"/>
<dbReference type="STRING" id="243233.MCA1879"/>
<dbReference type="GeneID" id="88224124"/>
<dbReference type="KEGG" id="mca:MCA1879"/>
<dbReference type="eggNOG" id="COG1057">
    <property type="taxonomic scope" value="Bacteria"/>
</dbReference>
<dbReference type="HOGENOM" id="CLU_069765_0_0_6"/>
<dbReference type="UniPathway" id="UPA00253">
    <property type="reaction ID" value="UER00332"/>
</dbReference>
<dbReference type="Proteomes" id="UP000006821">
    <property type="component" value="Chromosome"/>
</dbReference>
<dbReference type="GO" id="GO:0005524">
    <property type="term" value="F:ATP binding"/>
    <property type="evidence" value="ECO:0007669"/>
    <property type="project" value="UniProtKB-KW"/>
</dbReference>
<dbReference type="GO" id="GO:0004515">
    <property type="term" value="F:nicotinate-nucleotide adenylyltransferase activity"/>
    <property type="evidence" value="ECO:0007669"/>
    <property type="project" value="UniProtKB-UniRule"/>
</dbReference>
<dbReference type="GO" id="GO:0009435">
    <property type="term" value="P:NAD biosynthetic process"/>
    <property type="evidence" value="ECO:0007669"/>
    <property type="project" value="UniProtKB-UniRule"/>
</dbReference>
<dbReference type="CDD" id="cd02165">
    <property type="entry name" value="NMNAT"/>
    <property type="match status" value="1"/>
</dbReference>
<dbReference type="Gene3D" id="3.40.50.620">
    <property type="entry name" value="HUPs"/>
    <property type="match status" value="1"/>
</dbReference>
<dbReference type="HAMAP" id="MF_00244">
    <property type="entry name" value="NaMN_adenylyltr"/>
    <property type="match status" value="1"/>
</dbReference>
<dbReference type="InterPro" id="IPR004821">
    <property type="entry name" value="Cyt_trans-like"/>
</dbReference>
<dbReference type="InterPro" id="IPR005248">
    <property type="entry name" value="NadD/NMNAT"/>
</dbReference>
<dbReference type="InterPro" id="IPR014729">
    <property type="entry name" value="Rossmann-like_a/b/a_fold"/>
</dbReference>
<dbReference type="NCBIfam" id="TIGR00125">
    <property type="entry name" value="cyt_tran_rel"/>
    <property type="match status" value="1"/>
</dbReference>
<dbReference type="NCBIfam" id="TIGR00482">
    <property type="entry name" value="nicotinate (nicotinamide) nucleotide adenylyltransferase"/>
    <property type="match status" value="1"/>
</dbReference>
<dbReference type="NCBIfam" id="NF000839">
    <property type="entry name" value="PRK00071.1-1"/>
    <property type="match status" value="1"/>
</dbReference>
<dbReference type="NCBIfam" id="NF000840">
    <property type="entry name" value="PRK00071.1-3"/>
    <property type="match status" value="1"/>
</dbReference>
<dbReference type="PANTHER" id="PTHR39321">
    <property type="entry name" value="NICOTINATE-NUCLEOTIDE ADENYLYLTRANSFERASE-RELATED"/>
    <property type="match status" value="1"/>
</dbReference>
<dbReference type="PANTHER" id="PTHR39321:SF3">
    <property type="entry name" value="PHOSPHOPANTETHEINE ADENYLYLTRANSFERASE"/>
    <property type="match status" value="1"/>
</dbReference>
<dbReference type="Pfam" id="PF01467">
    <property type="entry name" value="CTP_transf_like"/>
    <property type="match status" value="1"/>
</dbReference>
<dbReference type="SUPFAM" id="SSF52374">
    <property type="entry name" value="Nucleotidylyl transferase"/>
    <property type="match status" value="1"/>
</dbReference>
<feature type="chain" id="PRO_0000336707" description="Probable nicotinate-nucleotide adenylyltransferase">
    <location>
        <begin position="1"/>
        <end position="210"/>
    </location>
</feature>
<organism>
    <name type="scientific">Methylococcus capsulatus (strain ATCC 33009 / NCIMB 11132 / Bath)</name>
    <dbReference type="NCBI Taxonomy" id="243233"/>
    <lineage>
        <taxon>Bacteria</taxon>
        <taxon>Pseudomonadati</taxon>
        <taxon>Pseudomonadota</taxon>
        <taxon>Gammaproteobacteria</taxon>
        <taxon>Methylococcales</taxon>
        <taxon>Methylococcaceae</taxon>
        <taxon>Methylococcus</taxon>
    </lineage>
</organism>
<sequence length="210" mass="23910">MIGIYGGTFDPVHYGHLRAALEVREDLELRELRFLPCHQPPHRPPPVADPQTRLRMLEIALADADGGFALDTRELDRGGPSYMVDTLSSIRKETGDEPLCLIVGLDAFLALPAWHRWRRLFSLAHIVVLQRPDYDIEYAEDLKHCVEERQVTDPTQLAAQPDGMIYFLEVTQLAIASTSIRRMLREGRSAKYLLPDAVLELIHRESLYAK</sequence>
<accession>Q606Y2</accession>
<keyword id="KW-0067">ATP-binding</keyword>
<keyword id="KW-0520">NAD</keyword>
<keyword id="KW-0547">Nucleotide-binding</keyword>
<keyword id="KW-0548">Nucleotidyltransferase</keyword>
<keyword id="KW-0662">Pyridine nucleotide biosynthesis</keyword>
<keyword id="KW-1185">Reference proteome</keyword>
<keyword id="KW-0808">Transferase</keyword>
<name>NADD_METCA</name>
<evidence type="ECO:0000255" key="1">
    <source>
        <dbReference type="HAMAP-Rule" id="MF_00244"/>
    </source>
</evidence>
<gene>
    <name evidence="1" type="primary">nadD</name>
    <name type="ordered locus">MCA1879</name>
</gene>
<proteinExistence type="inferred from homology"/>